<comment type="function">
    <text evidence="1">Catalyzes the methylthiolation of N6-(dimethylallyl)adenosine (i(6)A), leading to the formation of 2-methylthio-N6-(dimethylallyl)adenosine (ms(2)i(6)A) at position 37 in tRNAs that read codons beginning with uridine.</text>
</comment>
<comment type="catalytic activity">
    <reaction evidence="1">
        <text>N(6)-dimethylallyladenosine(37) in tRNA + (sulfur carrier)-SH + AH2 + 2 S-adenosyl-L-methionine = 2-methylsulfanyl-N(6)-dimethylallyladenosine(37) in tRNA + (sulfur carrier)-H + 5'-deoxyadenosine + L-methionine + A + S-adenosyl-L-homocysteine + 2 H(+)</text>
        <dbReference type="Rhea" id="RHEA:37067"/>
        <dbReference type="Rhea" id="RHEA-COMP:10375"/>
        <dbReference type="Rhea" id="RHEA-COMP:10376"/>
        <dbReference type="Rhea" id="RHEA-COMP:14737"/>
        <dbReference type="Rhea" id="RHEA-COMP:14739"/>
        <dbReference type="ChEBI" id="CHEBI:13193"/>
        <dbReference type="ChEBI" id="CHEBI:15378"/>
        <dbReference type="ChEBI" id="CHEBI:17319"/>
        <dbReference type="ChEBI" id="CHEBI:17499"/>
        <dbReference type="ChEBI" id="CHEBI:29917"/>
        <dbReference type="ChEBI" id="CHEBI:57844"/>
        <dbReference type="ChEBI" id="CHEBI:57856"/>
        <dbReference type="ChEBI" id="CHEBI:59789"/>
        <dbReference type="ChEBI" id="CHEBI:64428"/>
        <dbReference type="ChEBI" id="CHEBI:74415"/>
        <dbReference type="ChEBI" id="CHEBI:74417"/>
        <dbReference type="EC" id="2.8.4.3"/>
    </reaction>
</comment>
<comment type="cofactor">
    <cofactor evidence="1">
        <name>[4Fe-4S] cluster</name>
        <dbReference type="ChEBI" id="CHEBI:49883"/>
    </cofactor>
    <text evidence="1">Binds 2 [4Fe-4S] clusters. One cluster is coordinated with 3 cysteines and an exchangeable S-adenosyl-L-methionine.</text>
</comment>
<comment type="subunit">
    <text evidence="1">Monomer.</text>
</comment>
<comment type="subcellular location">
    <subcellularLocation>
        <location evidence="1">Cytoplasm</location>
    </subcellularLocation>
</comment>
<comment type="similarity">
    <text evidence="1">Belongs to the methylthiotransferase family. MiaB subfamily.</text>
</comment>
<comment type="sequence caution" evidence="3">
    <conflict type="erroneous initiation">
        <sequence resource="EMBL-CDS" id="CAI27714"/>
    </conflict>
</comment>
<evidence type="ECO:0000255" key="1">
    <source>
        <dbReference type="HAMAP-Rule" id="MF_01864"/>
    </source>
</evidence>
<evidence type="ECO:0000255" key="2">
    <source>
        <dbReference type="PROSITE-ProRule" id="PRU01266"/>
    </source>
</evidence>
<evidence type="ECO:0000305" key="3"/>
<sequence length="445" mass="50853">MQGLYIKSYGCQMNVYDSLIIENIIKPLGFSIVNELSEADIVILNTCHIREKAAEKLYSELGRIRKIQETKNLTIVVAGCVAQAEGTEIFTRAPFVDIVVGPQSIHTLPELIVKARKIKKQIINIDFPVISKFDAIAVEEYTKNQKVSAFISVQEGCNKFCSFCVVPYTRGEEYSRTVEAIFKEALILADSGIKEITLIGQNVNAYHGTYKGNEWDLGRLIQHIAKISSIERIYYTTSHPRDMHESLYEAHGIEKKLIPFIHLPVQSGSNKILRKMNRKHTAEEYINIIKTLRKHRSDIAYSSDFIVGFPGETDEDFENTIRLIEEVKFSQAYSFKYSPRPGTPSAEYTSQIPDEIKSQRLTKLQELVHKQQLEFNKKMIGETHPVLFYKKGKFDNQIIGKTPYMQSCYINTENPDLYYNKIVPIKITDAHKNHLTGIIPHTLPV</sequence>
<feature type="chain" id="PRO_0000374274" description="tRNA-2-methylthio-N(6)-dimethylallyladenosine synthase">
    <location>
        <begin position="1"/>
        <end position="445"/>
    </location>
</feature>
<feature type="domain" description="MTTase N-terminal" evidence="1">
    <location>
        <begin position="2"/>
        <end position="117"/>
    </location>
</feature>
<feature type="domain" description="Radical SAM core" evidence="2">
    <location>
        <begin position="143"/>
        <end position="374"/>
    </location>
</feature>
<feature type="domain" description="TRAM" evidence="1">
    <location>
        <begin position="377"/>
        <end position="441"/>
    </location>
</feature>
<feature type="binding site" evidence="1">
    <location>
        <position position="11"/>
    </location>
    <ligand>
        <name>[4Fe-4S] cluster</name>
        <dbReference type="ChEBI" id="CHEBI:49883"/>
        <label>1</label>
    </ligand>
</feature>
<feature type="binding site" evidence="1">
    <location>
        <position position="47"/>
    </location>
    <ligand>
        <name>[4Fe-4S] cluster</name>
        <dbReference type="ChEBI" id="CHEBI:49883"/>
        <label>1</label>
    </ligand>
</feature>
<feature type="binding site" evidence="1">
    <location>
        <position position="80"/>
    </location>
    <ligand>
        <name>[4Fe-4S] cluster</name>
        <dbReference type="ChEBI" id="CHEBI:49883"/>
        <label>1</label>
    </ligand>
</feature>
<feature type="binding site" evidence="1">
    <location>
        <position position="157"/>
    </location>
    <ligand>
        <name>[4Fe-4S] cluster</name>
        <dbReference type="ChEBI" id="CHEBI:49883"/>
        <label>2</label>
        <note>4Fe-4S-S-AdoMet</note>
    </ligand>
</feature>
<feature type="binding site" evidence="1">
    <location>
        <position position="161"/>
    </location>
    <ligand>
        <name>[4Fe-4S] cluster</name>
        <dbReference type="ChEBI" id="CHEBI:49883"/>
        <label>2</label>
        <note>4Fe-4S-S-AdoMet</note>
    </ligand>
</feature>
<feature type="binding site" evidence="1">
    <location>
        <position position="164"/>
    </location>
    <ligand>
        <name>[4Fe-4S] cluster</name>
        <dbReference type="ChEBI" id="CHEBI:49883"/>
        <label>2</label>
        <note>4Fe-4S-S-AdoMet</note>
    </ligand>
</feature>
<organism>
    <name type="scientific">Ehrlichia ruminantium (strain Gardel)</name>
    <dbReference type="NCBI Taxonomy" id="302409"/>
    <lineage>
        <taxon>Bacteria</taxon>
        <taxon>Pseudomonadati</taxon>
        <taxon>Pseudomonadota</taxon>
        <taxon>Alphaproteobacteria</taxon>
        <taxon>Rickettsiales</taxon>
        <taxon>Anaplasmataceae</taxon>
        <taxon>Ehrlichia</taxon>
    </lineage>
</organism>
<reference key="1">
    <citation type="journal article" date="2006" name="J. Bacteriol.">
        <title>Comparative genomic analysis of three strains of Ehrlichia ruminantium reveals an active process of genome size plasticity.</title>
        <authorList>
            <person name="Frutos R."/>
            <person name="Viari A."/>
            <person name="Ferraz C."/>
            <person name="Morgat A."/>
            <person name="Eychenie S."/>
            <person name="Kandassamy Y."/>
            <person name="Chantal I."/>
            <person name="Bensaid A."/>
            <person name="Coissac E."/>
            <person name="Vachiery N."/>
            <person name="Demaille J."/>
            <person name="Martinez D."/>
        </authorList>
    </citation>
    <scope>NUCLEOTIDE SEQUENCE [LARGE SCALE GENOMIC DNA]</scope>
    <source>
        <strain>Gardel</strain>
    </source>
</reference>
<gene>
    <name evidence="1" type="primary">miaB</name>
    <name type="ordered locus">ERGA_CDS_02620</name>
</gene>
<proteinExistence type="inferred from homology"/>
<name>MIAB_EHRRG</name>
<protein>
    <recommendedName>
        <fullName evidence="1">tRNA-2-methylthio-N(6)-dimethylallyladenosine synthase</fullName>
        <ecNumber evidence="1">2.8.4.3</ecNumber>
    </recommendedName>
    <alternativeName>
        <fullName evidence="1">(Dimethylallyl)adenosine tRNA methylthiotransferase MiaB</fullName>
    </alternativeName>
    <alternativeName>
        <fullName evidence="1">tRNA-i(6)A37 methylthiotransferase</fullName>
    </alternativeName>
</protein>
<accession>Q5FHD1</accession>
<keyword id="KW-0004">4Fe-4S</keyword>
<keyword id="KW-0963">Cytoplasm</keyword>
<keyword id="KW-0408">Iron</keyword>
<keyword id="KW-0411">Iron-sulfur</keyword>
<keyword id="KW-0479">Metal-binding</keyword>
<keyword id="KW-0949">S-adenosyl-L-methionine</keyword>
<keyword id="KW-0808">Transferase</keyword>
<keyword id="KW-0819">tRNA processing</keyword>
<dbReference type="EC" id="2.8.4.3" evidence="1"/>
<dbReference type="EMBL" id="CR925677">
    <property type="protein sequence ID" value="CAI27714.1"/>
    <property type="status" value="ALT_INIT"/>
    <property type="molecule type" value="Genomic_DNA"/>
</dbReference>
<dbReference type="RefSeq" id="WP_044156935.1">
    <property type="nucleotide sequence ID" value="NC_006831.1"/>
</dbReference>
<dbReference type="SMR" id="Q5FHD1"/>
<dbReference type="KEGG" id="erg:ERGA_CDS_02620"/>
<dbReference type="HOGENOM" id="CLU_018697_2_2_5"/>
<dbReference type="OrthoDB" id="9805215at2"/>
<dbReference type="Proteomes" id="UP000000533">
    <property type="component" value="Chromosome"/>
</dbReference>
<dbReference type="GO" id="GO:0005829">
    <property type="term" value="C:cytosol"/>
    <property type="evidence" value="ECO:0007669"/>
    <property type="project" value="TreeGrafter"/>
</dbReference>
<dbReference type="GO" id="GO:0051539">
    <property type="term" value="F:4 iron, 4 sulfur cluster binding"/>
    <property type="evidence" value="ECO:0007669"/>
    <property type="project" value="UniProtKB-UniRule"/>
</dbReference>
<dbReference type="GO" id="GO:0046872">
    <property type="term" value="F:metal ion binding"/>
    <property type="evidence" value="ECO:0007669"/>
    <property type="project" value="UniProtKB-KW"/>
</dbReference>
<dbReference type="GO" id="GO:0035597">
    <property type="term" value="F:N6-isopentenyladenosine methylthiotransferase activity"/>
    <property type="evidence" value="ECO:0007669"/>
    <property type="project" value="TreeGrafter"/>
</dbReference>
<dbReference type="CDD" id="cd01335">
    <property type="entry name" value="Radical_SAM"/>
    <property type="match status" value="1"/>
</dbReference>
<dbReference type="FunFam" id="3.40.50.12160:FF:000003">
    <property type="entry name" value="CDK5 regulatory subunit-associated protein 1"/>
    <property type="match status" value="1"/>
</dbReference>
<dbReference type="FunFam" id="3.80.30.20:FF:000001">
    <property type="entry name" value="tRNA-2-methylthio-N(6)-dimethylallyladenosine synthase 2"/>
    <property type="match status" value="1"/>
</dbReference>
<dbReference type="Gene3D" id="3.40.50.12160">
    <property type="entry name" value="Methylthiotransferase, N-terminal domain"/>
    <property type="match status" value="1"/>
</dbReference>
<dbReference type="Gene3D" id="3.80.30.20">
    <property type="entry name" value="tm_1862 like domain"/>
    <property type="match status" value="1"/>
</dbReference>
<dbReference type="HAMAP" id="MF_01864">
    <property type="entry name" value="tRNA_metthiotr_MiaB"/>
    <property type="match status" value="1"/>
</dbReference>
<dbReference type="InterPro" id="IPR006638">
    <property type="entry name" value="Elp3/MiaA/NifB-like_rSAM"/>
</dbReference>
<dbReference type="InterPro" id="IPR005839">
    <property type="entry name" value="Methylthiotransferase"/>
</dbReference>
<dbReference type="InterPro" id="IPR020612">
    <property type="entry name" value="Methylthiotransferase_CS"/>
</dbReference>
<dbReference type="InterPro" id="IPR013848">
    <property type="entry name" value="Methylthiotransferase_N"/>
</dbReference>
<dbReference type="InterPro" id="IPR038135">
    <property type="entry name" value="Methylthiotransferase_N_sf"/>
</dbReference>
<dbReference type="InterPro" id="IPR006463">
    <property type="entry name" value="MiaB_methiolase"/>
</dbReference>
<dbReference type="InterPro" id="IPR007197">
    <property type="entry name" value="rSAM"/>
</dbReference>
<dbReference type="InterPro" id="IPR023404">
    <property type="entry name" value="rSAM_horseshoe"/>
</dbReference>
<dbReference type="InterPro" id="IPR002792">
    <property type="entry name" value="TRAM_dom"/>
</dbReference>
<dbReference type="NCBIfam" id="TIGR01574">
    <property type="entry name" value="miaB-methiolase"/>
    <property type="match status" value="1"/>
</dbReference>
<dbReference type="NCBIfam" id="TIGR00089">
    <property type="entry name" value="MiaB/RimO family radical SAM methylthiotransferase"/>
    <property type="match status" value="1"/>
</dbReference>
<dbReference type="PANTHER" id="PTHR43020">
    <property type="entry name" value="CDK5 REGULATORY SUBUNIT-ASSOCIATED PROTEIN 1"/>
    <property type="match status" value="1"/>
</dbReference>
<dbReference type="PANTHER" id="PTHR43020:SF2">
    <property type="entry name" value="MITOCHONDRIAL TRNA METHYLTHIOTRANSFERASE CDK5RAP1"/>
    <property type="match status" value="1"/>
</dbReference>
<dbReference type="Pfam" id="PF04055">
    <property type="entry name" value="Radical_SAM"/>
    <property type="match status" value="1"/>
</dbReference>
<dbReference type="Pfam" id="PF01938">
    <property type="entry name" value="TRAM"/>
    <property type="match status" value="1"/>
</dbReference>
<dbReference type="Pfam" id="PF00919">
    <property type="entry name" value="UPF0004"/>
    <property type="match status" value="1"/>
</dbReference>
<dbReference type="SFLD" id="SFLDF00273">
    <property type="entry name" value="(dimethylallyl)adenosine_tRNA"/>
    <property type="match status" value="1"/>
</dbReference>
<dbReference type="SFLD" id="SFLDG01082">
    <property type="entry name" value="B12-binding_domain_containing"/>
    <property type="match status" value="1"/>
</dbReference>
<dbReference type="SFLD" id="SFLDG01061">
    <property type="entry name" value="methylthiotransferase"/>
    <property type="match status" value="1"/>
</dbReference>
<dbReference type="SMART" id="SM00729">
    <property type="entry name" value="Elp3"/>
    <property type="match status" value="1"/>
</dbReference>
<dbReference type="SUPFAM" id="SSF102114">
    <property type="entry name" value="Radical SAM enzymes"/>
    <property type="match status" value="1"/>
</dbReference>
<dbReference type="PROSITE" id="PS51449">
    <property type="entry name" value="MTTASE_N"/>
    <property type="match status" value="1"/>
</dbReference>
<dbReference type="PROSITE" id="PS01278">
    <property type="entry name" value="MTTASE_RADICAL"/>
    <property type="match status" value="1"/>
</dbReference>
<dbReference type="PROSITE" id="PS51918">
    <property type="entry name" value="RADICAL_SAM"/>
    <property type="match status" value="1"/>
</dbReference>